<sequence>MPKKKVLTPLPYLASIVFLPWWISLSFNKSLEPWVTNWWNTKQSEIFLNDIQEKNVLERFIELEELVLLDEMIKEYPETHIQKLRIGIHKETIQLVKMQNQNDIQIILHFSTNIITLTILSGFFIMGNEELVILNSWVQEFFYNLSDTIKAFSILLLTDLCIGFHSPHGWELMIGSIYKDFGFAHNDQIISGLVSTFPVILDTILKYWIFHYLNRVSPSLVVIYHSMNE</sequence>
<organism>
    <name type="scientific">Ceratophyllum demersum</name>
    <name type="common">Rigid hornwort</name>
    <name type="synonym">Coontail</name>
    <dbReference type="NCBI Taxonomy" id="4428"/>
    <lineage>
        <taxon>Eukaryota</taxon>
        <taxon>Viridiplantae</taxon>
        <taxon>Streptophyta</taxon>
        <taxon>Embryophyta</taxon>
        <taxon>Tracheophyta</taxon>
        <taxon>Spermatophyta</taxon>
        <taxon>Magnoliopsida</taxon>
        <taxon>Ceratophyllales</taxon>
        <taxon>Ceratophyllaceae</taxon>
        <taxon>Ceratophyllum</taxon>
    </lineage>
</organism>
<accession>A8SEB5</accession>
<evidence type="ECO:0000255" key="1">
    <source>
        <dbReference type="HAMAP-Rule" id="MF_01308"/>
    </source>
</evidence>
<evidence type="ECO:0000305" key="2"/>
<geneLocation type="chloroplast"/>
<gene>
    <name evidence="1" type="primary">cemA</name>
</gene>
<dbReference type="EMBL" id="EF614270">
    <property type="protein sequence ID" value="ABQ81462.1"/>
    <property type="molecule type" value="Genomic_DNA"/>
</dbReference>
<dbReference type="RefSeq" id="YP_001542459.1">
    <property type="nucleotide sequence ID" value="NC_009962.1"/>
</dbReference>
<dbReference type="SMR" id="A8SEB5"/>
<dbReference type="GeneID" id="5729481"/>
<dbReference type="GO" id="GO:0009706">
    <property type="term" value="C:chloroplast inner membrane"/>
    <property type="evidence" value="ECO:0007669"/>
    <property type="project" value="UniProtKB-SubCell"/>
</dbReference>
<dbReference type="GO" id="GO:0015297">
    <property type="term" value="F:antiporter activity"/>
    <property type="evidence" value="ECO:0007669"/>
    <property type="project" value="UniProtKB-KW"/>
</dbReference>
<dbReference type="GO" id="GO:0015078">
    <property type="term" value="F:proton transmembrane transporter activity"/>
    <property type="evidence" value="ECO:0007669"/>
    <property type="project" value="UniProtKB-UniRule"/>
</dbReference>
<dbReference type="GO" id="GO:0006813">
    <property type="term" value="P:potassium ion transport"/>
    <property type="evidence" value="ECO:0007669"/>
    <property type="project" value="UniProtKB-UniRule"/>
</dbReference>
<dbReference type="HAMAP" id="MF_01308">
    <property type="entry name" value="CemA_PxcA"/>
    <property type="match status" value="1"/>
</dbReference>
<dbReference type="InterPro" id="IPR004282">
    <property type="entry name" value="CemA"/>
</dbReference>
<dbReference type="PANTHER" id="PTHR33650:SF2">
    <property type="entry name" value="CHLOROPLAST ENVELOPE MEMBRANE PROTEIN"/>
    <property type="match status" value="1"/>
</dbReference>
<dbReference type="PANTHER" id="PTHR33650">
    <property type="entry name" value="CHLOROPLAST ENVELOPE MEMBRANE PROTEIN-RELATED"/>
    <property type="match status" value="1"/>
</dbReference>
<dbReference type="Pfam" id="PF03040">
    <property type="entry name" value="CemA"/>
    <property type="match status" value="1"/>
</dbReference>
<feature type="chain" id="PRO_0000323238" description="Potassium/proton antiporter CemA">
    <location>
        <begin position="1"/>
        <end position="229"/>
    </location>
</feature>
<feature type="transmembrane region" description="Helical" evidence="1">
    <location>
        <begin position="7"/>
        <end position="27"/>
    </location>
</feature>
<feature type="transmembrane region" description="Helical" evidence="1">
    <location>
        <begin position="106"/>
        <end position="126"/>
    </location>
</feature>
<feature type="transmembrane region" description="Helical" evidence="1">
    <location>
        <begin position="189"/>
        <end position="209"/>
    </location>
</feature>
<reference key="1">
    <citation type="journal article" date="2007" name="Proc. Natl. Acad. Sci. U.S.A.">
        <title>Using plastid genome-scale data to resolve enigmatic relationships among basal angiosperms.</title>
        <authorList>
            <person name="Moore M.J."/>
            <person name="Bell C.D."/>
            <person name="Soltis P.S."/>
            <person name="Soltis D.E."/>
        </authorList>
    </citation>
    <scope>NUCLEOTIDE SEQUENCE [LARGE SCALE GENOMIC DNA]</scope>
</reference>
<keyword id="KW-0050">Antiport</keyword>
<keyword id="KW-0150">Chloroplast</keyword>
<keyword id="KW-0375">Hydrogen ion transport</keyword>
<keyword id="KW-0406">Ion transport</keyword>
<keyword id="KW-0472">Membrane</keyword>
<keyword id="KW-0934">Plastid</keyword>
<keyword id="KW-1001">Plastid inner membrane</keyword>
<keyword id="KW-0630">Potassium</keyword>
<keyword id="KW-0633">Potassium transport</keyword>
<keyword id="KW-0812">Transmembrane</keyword>
<keyword id="KW-1133">Transmembrane helix</keyword>
<keyword id="KW-0813">Transport</keyword>
<protein>
    <recommendedName>
        <fullName evidence="1">Potassium/proton antiporter CemA</fullName>
    </recommendedName>
    <alternativeName>
        <fullName evidence="1">Chloroplast envelope membrane protein A</fullName>
        <shortName evidence="1">CemA</shortName>
    </alternativeName>
</protein>
<proteinExistence type="inferred from homology"/>
<name>CEMA_CERDE</name>
<comment type="function">
    <text evidence="1">Contributes to K(+)/H(+) antiport activity by supporting proton efflux to control proton extrusion and homeostasis in chloroplasts in a light-dependent manner to modulate photosynthesis. Prevents excessive induction of non-photochemical quenching (NPQ) under continuous-light conditions. Indirectly promotes efficient inorganic carbon uptake into chloroplasts.</text>
</comment>
<comment type="catalytic activity">
    <reaction evidence="1">
        <text>K(+)(in) + H(+)(out) = K(+)(out) + H(+)(in)</text>
        <dbReference type="Rhea" id="RHEA:29467"/>
        <dbReference type="ChEBI" id="CHEBI:15378"/>
        <dbReference type="ChEBI" id="CHEBI:29103"/>
    </reaction>
</comment>
<comment type="subcellular location">
    <subcellularLocation>
        <location evidence="1">Plastid</location>
        <location evidence="1">Chloroplast inner membrane</location>
        <topology evidence="1">Multi-pass membrane protein</topology>
    </subcellularLocation>
</comment>
<comment type="similarity">
    <text evidence="1 2">Belongs to the CemA family.</text>
</comment>